<reference key="1">
    <citation type="journal article" date="2011" name="J. Bacteriol.">
        <title>Comparative genomics of 28 Salmonella enterica isolates: evidence for CRISPR-mediated adaptive sublineage evolution.</title>
        <authorList>
            <person name="Fricke W.F."/>
            <person name="Mammel M.K."/>
            <person name="McDermott P.F."/>
            <person name="Tartera C."/>
            <person name="White D.G."/>
            <person name="Leclerc J.E."/>
            <person name="Ravel J."/>
            <person name="Cebula T.A."/>
        </authorList>
    </citation>
    <scope>NUCLEOTIDE SEQUENCE [LARGE SCALE GENOMIC DNA]</scope>
    <source>
        <strain>SL483</strain>
    </source>
</reference>
<protein>
    <recommendedName>
        <fullName evidence="1">Cytidylate kinase</fullName>
        <shortName evidence="1">CK</shortName>
        <ecNumber evidence="1">2.7.4.25</ecNumber>
    </recommendedName>
    <alternativeName>
        <fullName evidence="1">Cytidine monophosphate kinase</fullName>
        <shortName evidence="1">CMP kinase</shortName>
    </alternativeName>
</protein>
<feature type="chain" id="PRO_1000100679" description="Cytidylate kinase">
    <location>
        <begin position="1"/>
        <end position="227"/>
    </location>
</feature>
<feature type="binding site" evidence="1">
    <location>
        <begin position="12"/>
        <end position="20"/>
    </location>
    <ligand>
        <name>ATP</name>
        <dbReference type="ChEBI" id="CHEBI:30616"/>
    </ligand>
</feature>
<comment type="catalytic activity">
    <reaction evidence="1">
        <text>CMP + ATP = CDP + ADP</text>
        <dbReference type="Rhea" id="RHEA:11600"/>
        <dbReference type="ChEBI" id="CHEBI:30616"/>
        <dbReference type="ChEBI" id="CHEBI:58069"/>
        <dbReference type="ChEBI" id="CHEBI:60377"/>
        <dbReference type="ChEBI" id="CHEBI:456216"/>
        <dbReference type="EC" id="2.7.4.25"/>
    </reaction>
</comment>
<comment type="catalytic activity">
    <reaction evidence="1">
        <text>dCMP + ATP = dCDP + ADP</text>
        <dbReference type="Rhea" id="RHEA:25094"/>
        <dbReference type="ChEBI" id="CHEBI:30616"/>
        <dbReference type="ChEBI" id="CHEBI:57566"/>
        <dbReference type="ChEBI" id="CHEBI:58593"/>
        <dbReference type="ChEBI" id="CHEBI:456216"/>
        <dbReference type="EC" id="2.7.4.25"/>
    </reaction>
</comment>
<comment type="subcellular location">
    <subcellularLocation>
        <location evidence="1">Cytoplasm</location>
    </subcellularLocation>
</comment>
<comment type="similarity">
    <text evidence="1">Belongs to the cytidylate kinase family. Type 1 subfamily.</text>
</comment>
<sequence>MTAIAPVITIDGPSGAGKGTLCKAMAEALQWHLLDSGAIYRVLALAALHHHVDLASEDALVPLASHLDVRFVSTDGNLEVILEGEDVSGEIRTQEVANAASQVAAFPRVREALLRRQRAFREAPGLIADGRDMGTVVFPDAPVKIFLDASSEERAHRRMLQLQENGFSVNFERLLAEIKERDDRDRNRAVAPLVPAADALVLDSTRLSIEQVIEKALQYARQKLALA</sequence>
<evidence type="ECO:0000255" key="1">
    <source>
        <dbReference type="HAMAP-Rule" id="MF_00238"/>
    </source>
</evidence>
<dbReference type="EC" id="2.7.4.25" evidence="1"/>
<dbReference type="EMBL" id="CP001138">
    <property type="protein sequence ID" value="ACH48947.1"/>
    <property type="molecule type" value="Genomic_DNA"/>
</dbReference>
<dbReference type="RefSeq" id="WP_000125007.1">
    <property type="nucleotide sequence ID" value="NC_011149.1"/>
</dbReference>
<dbReference type="SMR" id="B5F163"/>
<dbReference type="KEGG" id="sea:SeAg_B0986"/>
<dbReference type="HOGENOM" id="CLU_079959_0_2_6"/>
<dbReference type="Proteomes" id="UP000008819">
    <property type="component" value="Chromosome"/>
</dbReference>
<dbReference type="GO" id="GO:0005829">
    <property type="term" value="C:cytosol"/>
    <property type="evidence" value="ECO:0007669"/>
    <property type="project" value="TreeGrafter"/>
</dbReference>
<dbReference type="GO" id="GO:0005524">
    <property type="term" value="F:ATP binding"/>
    <property type="evidence" value="ECO:0007669"/>
    <property type="project" value="UniProtKB-UniRule"/>
</dbReference>
<dbReference type="GO" id="GO:0036430">
    <property type="term" value="F:CMP kinase activity"/>
    <property type="evidence" value="ECO:0007669"/>
    <property type="project" value="RHEA"/>
</dbReference>
<dbReference type="GO" id="GO:0036431">
    <property type="term" value="F:dCMP kinase activity"/>
    <property type="evidence" value="ECO:0007669"/>
    <property type="project" value="RHEA"/>
</dbReference>
<dbReference type="GO" id="GO:0015949">
    <property type="term" value="P:nucleobase-containing small molecule interconversion"/>
    <property type="evidence" value="ECO:0007669"/>
    <property type="project" value="TreeGrafter"/>
</dbReference>
<dbReference type="GO" id="GO:0006220">
    <property type="term" value="P:pyrimidine nucleotide metabolic process"/>
    <property type="evidence" value="ECO:0007669"/>
    <property type="project" value="UniProtKB-UniRule"/>
</dbReference>
<dbReference type="CDD" id="cd02020">
    <property type="entry name" value="CMPK"/>
    <property type="match status" value="1"/>
</dbReference>
<dbReference type="FunFam" id="3.40.50.300:FF:000262">
    <property type="entry name" value="Cytidylate kinase"/>
    <property type="match status" value="1"/>
</dbReference>
<dbReference type="Gene3D" id="3.40.50.300">
    <property type="entry name" value="P-loop containing nucleotide triphosphate hydrolases"/>
    <property type="match status" value="1"/>
</dbReference>
<dbReference type="HAMAP" id="MF_00238">
    <property type="entry name" value="Cytidyl_kinase_type1"/>
    <property type="match status" value="1"/>
</dbReference>
<dbReference type="InterPro" id="IPR003136">
    <property type="entry name" value="Cytidylate_kin"/>
</dbReference>
<dbReference type="InterPro" id="IPR011994">
    <property type="entry name" value="Cytidylate_kinase_dom"/>
</dbReference>
<dbReference type="InterPro" id="IPR027417">
    <property type="entry name" value="P-loop_NTPase"/>
</dbReference>
<dbReference type="NCBIfam" id="TIGR00017">
    <property type="entry name" value="cmk"/>
    <property type="match status" value="1"/>
</dbReference>
<dbReference type="PANTHER" id="PTHR21299:SF2">
    <property type="entry name" value="CYTIDYLATE KINASE"/>
    <property type="match status" value="1"/>
</dbReference>
<dbReference type="PANTHER" id="PTHR21299">
    <property type="entry name" value="CYTIDYLATE KINASE/PANTOATE-BETA-ALANINE LIGASE"/>
    <property type="match status" value="1"/>
</dbReference>
<dbReference type="Pfam" id="PF02224">
    <property type="entry name" value="Cytidylate_kin"/>
    <property type="match status" value="1"/>
</dbReference>
<dbReference type="SUPFAM" id="SSF52540">
    <property type="entry name" value="P-loop containing nucleoside triphosphate hydrolases"/>
    <property type="match status" value="1"/>
</dbReference>
<gene>
    <name evidence="1" type="primary">cmk</name>
    <name type="ordered locus">SeAg_B0986</name>
</gene>
<proteinExistence type="inferred from homology"/>
<accession>B5F163</accession>
<organism>
    <name type="scientific">Salmonella agona (strain SL483)</name>
    <dbReference type="NCBI Taxonomy" id="454166"/>
    <lineage>
        <taxon>Bacteria</taxon>
        <taxon>Pseudomonadati</taxon>
        <taxon>Pseudomonadota</taxon>
        <taxon>Gammaproteobacteria</taxon>
        <taxon>Enterobacterales</taxon>
        <taxon>Enterobacteriaceae</taxon>
        <taxon>Salmonella</taxon>
    </lineage>
</organism>
<name>KCY_SALA4</name>
<keyword id="KW-0067">ATP-binding</keyword>
<keyword id="KW-0963">Cytoplasm</keyword>
<keyword id="KW-0418">Kinase</keyword>
<keyword id="KW-0547">Nucleotide-binding</keyword>
<keyword id="KW-0808">Transferase</keyword>